<gene>
    <name evidence="1" type="primary">der</name>
    <name type="synonym">engA</name>
    <name type="ordered locus">Shew185_3001</name>
</gene>
<sequence length="488" mass="54634">MIPVVALVGRPNVGKSTLFNRLTRTRDALVADFPGLTRDRKYGRAFLSGYEFIVVDTGGIDGTEEGIETKMAEQSLAAIEEADVVLFMTDARAGLTAADLSIAQHLRSREKTTFVVANKVDGIDADSACAEFWSLGLGEVYQMAASQGRGVTNMIEYALTPYAEAMGIVRQGEDEVTEEREYTEEEAEAEQKRLQDLPIKLAIIGKPNVGKSTLTNRILGEERVVVFDEPGTTRDSIYIPMEREGREYVIIDTAGVRRRSKVHQVIEKFSVIKTLKAVEDANVVLLIIDAREGIAEQDLGLLGFALNAGRALVIAVNKWDGIDQGIKDRVKSELDRRLGFIDFARIHFISALHGTGVGHLFESIEEAYDSATRRVSTSMLTRIMQMSQDDHQPPLVNGRRVKLKYAHAGGYNPPIVVIHGNQVSRLPDSYKRYMMNYFRRSLKVVGTPIQLRFQEGDNPFENKTEKLTMSQERRRKRAQSHIKDRKTK</sequence>
<comment type="function">
    <text evidence="1">GTPase that plays an essential role in the late steps of ribosome biogenesis.</text>
</comment>
<comment type="subunit">
    <text evidence="1">Associates with the 50S ribosomal subunit.</text>
</comment>
<comment type="similarity">
    <text evidence="1">Belongs to the TRAFAC class TrmE-Era-EngA-EngB-Septin-like GTPase superfamily. EngA (Der) GTPase family.</text>
</comment>
<protein>
    <recommendedName>
        <fullName evidence="1">GTPase Der</fullName>
    </recommendedName>
    <alternativeName>
        <fullName evidence="1">GTP-binding protein EngA</fullName>
    </alternativeName>
</protein>
<feature type="chain" id="PRO_1000011733" description="GTPase Der">
    <location>
        <begin position="1"/>
        <end position="488"/>
    </location>
</feature>
<feature type="domain" description="EngA-type G 1">
    <location>
        <begin position="3"/>
        <end position="166"/>
    </location>
</feature>
<feature type="domain" description="EngA-type G 2">
    <location>
        <begin position="199"/>
        <end position="372"/>
    </location>
</feature>
<feature type="domain" description="KH-like" evidence="1">
    <location>
        <begin position="373"/>
        <end position="457"/>
    </location>
</feature>
<feature type="region of interest" description="Disordered" evidence="2">
    <location>
        <begin position="460"/>
        <end position="488"/>
    </location>
</feature>
<feature type="compositionally biased region" description="Basic residues" evidence="2">
    <location>
        <begin position="473"/>
        <end position="488"/>
    </location>
</feature>
<feature type="binding site" evidence="1">
    <location>
        <begin position="9"/>
        <end position="16"/>
    </location>
    <ligand>
        <name>GTP</name>
        <dbReference type="ChEBI" id="CHEBI:37565"/>
        <label>1</label>
    </ligand>
</feature>
<feature type="binding site" evidence="1">
    <location>
        <begin position="56"/>
        <end position="60"/>
    </location>
    <ligand>
        <name>GTP</name>
        <dbReference type="ChEBI" id="CHEBI:37565"/>
        <label>1</label>
    </ligand>
</feature>
<feature type="binding site" evidence="1">
    <location>
        <begin position="118"/>
        <end position="121"/>
    </location>
    <ligand>
        <name>GTP</name>
        <dbReference type="ChEBI" id="CHEBI:37565"/>
        <label>1</label>
    </ligand>
</feature>
<feature type="binding site" evidence="1">
    <location>
        <begin position="205"/>
        <end position="212"/>
    </location>
    <ligand>
        <name>GTP</name>
        <dbReference type="ChEBI" id="CHEBI:37565"/>
        <label>2</label>
    </ligand>
</feature>
<feature type="binding site" evidence="1">
    <location>
        <begin position="252"/>
        <end position="256"/>
    </location>
    <ligand>
        <name>GTP</name>
        <dbReference type="ChEBI" id="CHEBI:37565"/>
        <label>2</label>
    </ligand>
</feature>
<feature type="binding site" evidence="1">
    <location>
        <begin position="317"/>
        <end position="320"/>
    </location>
    <ligand>
        <name>GTP</name>
        <dbReference type="ChEBI" id="CHEBI:37565"/>
        <label>2</label>
    </ligand>
</feature>
<proteinExistence type="inferred from homology"/>
<dbReference type="EMBL" id="CP000753">
    <property type="protein sequence ID" value="ABS09132.1"/>
    <property type="molecule type" value="Genomic_DNA"/>
</dbReference>
<dbReference type="RefSeq" id="WP_006082478.1">
    <property type="nucleotide sequence ID" value="NC_009665.1"/>
</dbReference>
<dbReference type="SMR" id="A6WQP3"/>
<dbReference type="GeneID" id="11773200"/>
<dbReference type="KEGG" id="sbm:Shew185_3001"/>
<dbReference type="HOGENOM" id="CLU_016077_5_1_6"/>
<dbReference type="GO" id="GO:0005525">
    <property type="term" value="F:GTP binding"/>
    <property type="evidence" value="ECO:0007669"/>
    <property type="project" value="UniProtKB-UniRule"/>
</dbReference>
<dbReference type="GO" id="GO:0043022">
    <property type="term" value="F:ribosome binding"/>
    <property type="evidence" value="ECO:0007669"/>
    <property type="project" value="TreeGrafter"/>
</dbReference>
<dbReference type="GO" id="GO:0042254">
    <property type="term" value="P:ribosome biogenesis"/>
    <property type="evidence" value="ECO:0007669"/>
    <property type="project" value="UniProtKB-KW"/>
</dbReference>
<dbReference type="CDD" id="cd01894">
    <property type="entry name" value="EngA1"/>
    <property type="match status" value="1"/>
</dbReference>
<dbReference type="CDD" id="cd01895">
    <property type="entry name" value="EngA2"/>
    <property type="match status" value="1"/>
</dbReference>
<dbReference type="FunFam" id="3.30.300.20:FF:000004">
    <property type="entry name" value="GTPase Der"/>
    <property type="match status" value="1"/>
</dbReference>
<dbReference type="FunFam" id="3.40.50.300:FF:000040">
    <property type="entry name" value="GTPase Der"/>
    <property type="match status" value="1"/>
</dbReference>
<dbReference type="FunFam" id="3.40.50.300:FF:000057">
    <property type="entry name" value="GTPase Der"/>
    <property type="match status" value="1"/>
</dbReference>
<dbReference type="Gene3D" id="3.30.300.20">
    <property type="match status" value="1"/>
</dbReference>
<dbReference type="Gene3D" id="3.40.50.300">
    <property type="entry name" value="P-loop containing nucleotide triphosphate hydrolases"/>
    <property type="match status" value="2"/>
</dbReference>
<dbReference type="HAMAP" id="MF_00195">
    <property type="entry name" value="GTPase_Der"/>
    <property type="match status" value="1"/>
</dbReference>
<dbReference type="InterPro" id="IPR031166">
    <property type="entry name" value="G_ENGA"/>
</dbReference>
<dbReference type="InterPro" id="IPR006073">
    <property type="entry name" value="GTP-bd"/>
</dbReference>
<dbReference type="InterPro" id="IPR016484">
    <property type="entry name" value="GTPase_Der"/>
</dbReference>
<dbReference type="InterPro" id="IPR032859">
    <property type="entry name" value="KH_dom-like"/>
</dbReference>
<dbReference type="InterPro" id="IPR015946">
    <property type="entry name" value="KH_dom-like_a/b"/>
</dbReference>
<dbReference type="InterPro" id="IPR027417">
    <property type="entry name" value="P-loop_NTPase"/>
</dbReference>
<dbReference type="InterPro" id="IPR005225">
    <property type="entry name" value="Small_GTP-bd"/>
</dbReference>
<dbReference type="NCBIfam" id="TIGR03594">
    <property type="entry name" value="GTPase_EngA"/>
    <property type="match status" value="1"/>
</dbReference>
<dbReference type="NCBIfam" id="TIGR00231">
    <property type="entry name" value="small_GTP"/>
    <property type="match status" value="2"/>
</dbReference>
<dbReference type="PANTHER" id="PTHR43834">
    <property type="entry name" value="GTPASE DER"/>
    <property type="match status" value="1"/>
</dbReference>
<dbReference type="PANTHER" id="PTHR43834:SF6">
    <property type="entry name" value="GTPASE DER"/>
    <property type="match status" value="1"/>
</dbReference>
<dbReference type="Pfam" id="PF14714">
    <property type="entry name" value="KH_dom-like"/>
    <property type="match status" value="1"/>
</dbReference>
<dbReference type="Pfam" id="PF01926">
    <property type="entry name" value="MMR_HSR1"/>
    <property type="match status" value="2"/>
</dbReference>
<dbReference type="PIRSF" id="PIRSF006485">
    <property type="entry name" value="GTP-binding_EngA"/>
    <property type="match status" value="1"/>
</dbReference>
<dbReference type="PRINTS" id="PR00326">
    <property type="entry name" value="GTP1OBG"/>
</dbReference>
<dbReference type="SUPFAM" id="SSF52540">
    <property type="entry name" value="P-loop containing nucleoside triphosphate hydrolases"/>
    <property type="match status" value="2"/>
</dbReference>
<dbReference type="PROSITE" id="PS51712">
    <property type="entry name" value="G_ENGA"/>
    <property type="match status" value="2"/>
</dbReference>
<reference key="1">
    <citation type="submission" date="2007-07" db="EMBL/GenBank/DDBJ databases">
        <title>Complete sequence of chromosome of Shewanella baltica OS185.</title>
        <authorList>
            <consortium name="US DOE Joint Genome Institute"/>
            <person name="Copeland A."/>
            <person name="Lucas S."/>
            <person name="Lapidus A."/>
            <person name="Barry K."/>
            <person name="Glavina del Rio T."/>
            <person name="Dalin E."/>
            <person name="Tice H."/>
            <person name="Pitluck S."/>
            <person name="Sims D."/>
            <person name="Brettin T."/>
            <person name="Bruce D."/>
            <person name="Detter J.C."/>
            <person name="Han C."/>
            <person name="Schmutz J."/>
            <person name="Larimer F."/>
            <person name="Land M."/>
            <person name="Hauser L."/>
            <person name="Kyrpides N."/>
            <person name="Mikhailova N."/>
            <person name="Brettar I."/>
            <person name="Rodrigues J."/>
            <person name="Konstantinidis K."/>
            <person name="Tiedje J."/>
            <person name="Richardson P."/>
        </authorList>
    </citation>
    <scope>NUCLEOTIDE SEQUENCE [LARGE SCALE GENOMIC DNA]</scope>
    <source>
        <strain>OS185</strain>
    </source>
</reference>
<evidence type="ECO:0000255" key="1">
    <source>
        <dbReference type="HAMAP-Rule" id="MF_00195"/>
    </source>
</evidence>
<evidence type="ECO:0000256" key="2">
    <source>
        <dbReference type="SAM" id="MobiDB-lite"/>
    </source>
</evidence>
<keyword id="KW-0342">GTP-binding</keyword>
<keyword id="KW-0547">Nucleotide-binding</keyword>
<keyword id="KW-0677">Repeat</keyword>
<keyword id="KW-0690">Ribosome biogenesis</keyword>
<name>DER_SHEB8</name>
<organism>
    <name type="scientific">Shewanella baltica (strain OS185)</name>
    <dbReference type="NCBI Taxonomy" id="402882"/>
    <lineage>
        <taxon>Bacteria</taxon>
        <taxon>Pseudomonadati</taxon>
        <taxon>Pseudomonadota</taxon>
        <taxon>Gammaproteobacteria</taxon>
        <taxon>Alteromonadales</taxon>
        <taxon>Shewanellaceae</taxon>
        <taxon>Shewanella</taxon>
    </lineage>
</organism>
<accession>A6WQP3</accession>